<organism>
    <name type="scientific">Homo sapiens</name>
    <name type="common">Human</name>
    <dbReference type="NCBI Taxonomy" id="9606"/>
    <lineage>
        <taxon>Eukaryota</taxon>
        <taxon>Metazoa</taxon>
        <taxon>Chordata</taxon>
        <taxon>Craniata</taxon>
        <taxon>Vertebrata</taxon>
        <taxon>Euteleostomi</taxon>
        <taxon>Mammalia</taxon>
        <taxon>Eutheria</taxon>
        <taxon>Euarchontoglires</taxon>
        <taxon>Primates</taxon>
        <taxon>Haplorrhini</taxon>
        <taxon>Catarrhini</taxon>
        <taxon>Hominidae</taxon>
        <taxon>Homo</taxon>
    </lineage>
</organism>
<protein>
    <recommendedName>
        <fullName>Phosphatidylinositol 4-kinase type 2-beta</fullName>
        <ecNumber evidence="4 5">2.7.1.67</ecNumber>
    </recommendedName>
    <alternativeName>
        <fullName>Phosphatidylinositol 4-kinase type II-beta</fullName>
        <shortName>PI4KII-BETA</shortName>
    </alternativeName>
</protein>
<keyword id="KW-0002">3D-structure</keyword>
<keyword id="KW-0067">ATP-binding</keyword>
<keyword id="KW-1003">Cell membrane</keyword>
<keyword id="KW-0963">Cytoplasm</keyword>
<keyword id="KW-0256">Endoplasmic reticulum</keyword>
<keyword id="KW-0967">Endosome</keyword>
<keyword id="KW-0333">Golgi apparatus</keyword>
<keyword id="KW-0418">Kinase</keyword>
<keyword id="KW-0443">Lipid metabolism</keyword>
<keyword id="KW-0472">Membrane</keyword>
<keyword id="KW-0547">Nucleotide-binding</keyword>
<keyword id="KW-0597">Phosphoprotein</keyword>
<keyword id="KW-1267">Proteomics identification</keyword>
<keyword id="KW-1185">Reference proteome</keyword>
<keyword id="KW-0808">Transferase</keyword>
<name>P4K2B_HUMAN</name>
<proteinExistence type="evidence at protein level"/>
<accession>Q8TCG2</accession>
<accession>Q9NUW2</accession>
<reference key="1">
    <citation type="journal article" date="2002" name="J. Biol. Chem.">
        <title>Characterization of type II phosphatidylinositol 4-kinase isoforms reveals association of the enzymes with endosomal vesicular compartments.</title>
        <authorList>
            <person name="Balla A."/>
            <person name="Tuymetova G."/>
            <person name="Barshishat M."/>
            <person name="Geiszt M."/>
            <person name="Balla T."/>
        </authorList>
    </citation>
    <scope>NUCLEOTIDE SEQUENCE [MRNA]</scope>
    <scope>FUNCTION</scope>
    <scope>CATALYTIC ACTIVITY</scope>
    <scope>ACTIVITY REGULATION</scope>
    <scope>SUBCELLULAR LOCATION</scope>
    <scope>TISSUE SPECIFICITY</scope>
    <scope>VARIANT PRO-78</scope>
    <scope>MUTAGENESIS OF ASP-304</scope>
</reference>
<reference key="2">
    <citation type="journal article" date="2002" name="J. Biol. Chem.">
        <title>Type II phosphatidylinositol 4-kinase beta is a cytosolic and peripheral membrane protein that is recruited to the plasma membrane and activated by Rac-GTP.</title>
        <authorList>
            <person name="Wei Y.J."/>
            <person name="Sun H.Q."/>
            <person name="Yamamoto M."/>
            <person name="Wlodarski P."/>
            <person name="Kunii K."/>
            <person name="Martinez M."/>
            <person name="Barylko B."/>
            <person name="Albanesi J.P."/>
            <person name="Yin H.L."/>
        </authorList>
    </citation>
    <scope>NUCLEOTIDE SEQUENCE [MRNA]</scope>
    <scope>FUNCTION</scope>
    <scope>CATALYTIC ACTIVITY</scope>
    <scope>ACTIVITY REGULATION</scope>
    <scope>SUBCELLULAR LOCATION</scope>
    <scope>TOPOLOGY</scope>
    <scope>VARIANT PRO-78</scope>
    <source>
        <tissue>Brain</tissue>
    </source>
</reference>
<reference key="3">
    <citation type="submission" date="2001-08" db="EMBL/GenBank/DDBJ databases">
        <title>Beta isoform of human type II phosphatidylinositol 4-kinase (PI4KIIbeta).</title>
        <authorList>
            <person name="Hong W."/>
        </authorList>
    </citation>
    <scope>NUCLEOTIDE SEQUENCE [MRNA]</scope>
</reference>
<reference key="4">
    <citation type="journal article" date="2004" name="Nat. Genet.">
        <title>Complete sequencing and characterization of 21,243 full-length human cDNAs.</title>
        <authorList>
            <person name="Ota T."/>
            <person name="Suzuki Y."/>
            <person name="Nishikawa T."/>
            <person name="Otsuki T."/>
            <person name="Sugiyama T."/>
            <person name="Irie R."/>
            <person name="Wakamatsu A."/>
            <person name="Hayashi K."/>
            <person name="Sato H."/>
            <person name="Nagai K."/>
            <person name="Kimura K."/>
            <person name="Makita H."/>
            <person name="Sekine M."/>
            <person name="Obayashi M."/>
            <person name="Nishi T."/>
            <person name="Shibahara T."/>
            <person name="Tanaka T."/>
            <person name="Ishii S."/>
            <person name="Yamamoto J."/>
            <person name="Saito K."/>
            <person name="Kawai Y."/>
            <person name="Isono Y."/>
            <person name="Nakamura Y."/>
            <person name="Nagahari K."/>
            <person name="Murakami K."/>
            <person name="Yasuda T."/>
            <person name="Iwayanagi T."/>
            <person name="Wagatsuma M."/>
            <person name="Shiratori A."/>
            <person name="Sudo H."/>
            <person name="Hosoiri T."/>
            <person name="Kaku Y."/>
            <person name="Kodaira H."/>
            <person name="Kondo H."/>
            <person name="Sugawara M."/>
            <person name="Takahashi M."/>
            <person name="Kanda K."/>
            <person name="Yokoi T."/>
            <person name="Furuya T."/>
            <person name="Kikkawa E."/>
            <person name="Omura Y."/>
            <person name="Abe K."/>
            <person name="Kamihara K."/>
            <person name="Katsuta N."/>
            <person name="Sato K."/>
            <person name="Tanikawa M."/>
            <person name="Yamazaki M."/>
            <person name="Ninomiya K."/>
            <person name="Ishibashi T."/>
            <person name="Yamashita H."/>
            <person name="Murakawa K."/>
            <person name="Fujimori K."/>
            <person name="Tanai H."/>
            <person name="Kimata M."/>
            <person name="Watanabe M."/>
            <person name="Hiraoka S."/>
            <person name="Chiba Y."/>
            <person name="Ishida S."/>
            <person name="Ono Y."/>
            <person name="Takiguchi S."/>
            <person name="Watanabe S."/>
            <person name="Yosida M."/>
            <person name="Hotuta T."/>
            <person name="Kusano J."/>
            <person name="Kanehori K."/>
            <person name="Takahashi-Fujii A."/>
            <person name="Hara H."/>
            <person name="Tanase T.-O."/>
            <person name="Nomura Y."/>
            <person name="Togiya S."/>
            <person name="Komai F."/>
            <person name="Hara R."/>
            <person name="Takeuchi K."/>
            <person name="Arita M."/>
            <person name="Imose N."/>
            <person name="Musashino K."/>
            <person name="Yuuki H."/>
            <person name="Oshima A."/>
            <person name="Sasaki N."/>
            <person name="Aotsuka S."/>
            <person name="Yoshikawa Y."/>
            <person name="Matsunawa H."/>
            <person name="Ichihara T."/>
            <person name="Shiohata N."/>
            <person name="Sano S."/>
            <person name="Moriya S."/>
            <person name="Momiyama H."/>
            <person name="Satoh N."/>
            <person name="Takami S."/>
            <person name="Terashima Y."/>
            <person name="Suzuki O."/>
            <person name="Nakagawa S."/>
            <person name="Senoh A."/>
            <person name="Mizoguchi H."/>
            <person name="Goto Y."/>
            <person name="Shimizu F."/>
            <person name="Wakebe H."/>
            <person name="Hishigaki H."/>
            <person name="Watanabe T."/>
            <person name="Sugiyama A."/>
            <person name="Takemoto M."/>
            <person name="Kawakami B."/>
            <person name="Yamazaki M."/>
            <person name="Watanabe K."/>
            <person name="Kumagai A."/>
            <person name="Itakura S."/>
            <person name="Fukuzumi Y."/>
            <person name="Fujimori Y."/>
            <person name="Komiyama M."/>
            <person name="Tashiro H."/>
            <person name="Tanigami A."/>
            <person name="Fujiwara T."/>
            <person name="Ono T."/>
            <person name="Yamada K."/>
            <person name="Fujii Y."/>
            <person name="Ozaki K."/>
            <person name="Hirao M."/>
            <person name="Ohmori Y."/>
            <person name="Kawabata A."/>
            <person name="Hikiji T."/>
            <person name="Kobatake N."/>
            <person name="Inagaki H."/>
            <person name="Ikema Y."/>
            <person name="Okamoto S."/>
            <person name="Okitani R."/>
            <person name="Kawakami T."/>
            <person name="Noguchi S."/>
            <person name="Itoh T."/>
            <person name="Shigeta K."/>
            <person name="Senba T."/>
            <person name="Matsumura K."/>
            <person name="Nakajima Y."/>
            <person name="Mizuno T."/>
            <person name="Morinaga M."/>
            <person name="Sasaki M."/>
            <person name="Togashi T."/>
            <person name="Oyama M."/>
            <person name="Hata H."/>
            <person name="Watanabe M."/>
            <person name="Komatsu T."/>
            <person name="Mizushima-Sugano J."/>
            <person name="Satoh T."/>
            <person name="Shirai Y."/>
            <person name="Takahashi Y."/>
            <person name="Nakagawa K."/>
            <person name="Okumura K."/>
            <person name="Nagase T."/>
            <person name="Nomura N."/>
            <person name="Kikuchi H."/>
            <person name="Masuho Y."/>
            <person name="Yamashita R."/>
            <person name="Nakai K."/>
            <person name="Yada T."/>
            <person name="Nakamura Y."/>
            <person name="Ohara O."/>
            <person name="Isogai T."/>
            <person name="Sugano S."/>
        </authorList>
    </citation>
    <scope>NUCLEOTIDE SEQUENCE [LARGE SCALE MRNA]</scope>
    <scope>VARIANT PRO-78</scope>
    <source>
        <tissue>Placenta</tissue>
    </source>
</reference>
<reference key="5">
    <citation type="journal article" date="2004" name="Genome Res.">
        <title>The status, quality, and expansion of the NIH full-length cDNA project: the Mammalian Gene Collection (MGC).</title>
        <authorList>
            <consortium name="The MGC Project Team"/>
        </authorList>
    </citation>
    <scope>NUCLEOTIDE SEQUENCE [LARGE SCALE MRNA]</scope>
    <scope>VARIANT PRO-78</scope>
    <source>
        <tissue>Skin</tissue>
    </source>
</reference>
<reference key="6">
    <citation type="journal article" date="2009" name="Mol. Cell. Proteomics">
        <title>Large-scale proteomics analysis of the human kinome.</title>
        <authorList>
            <person name="Oppermann F.S."/>
            <person name="Gnad F."/>
            <person name="Olsen J.V."/>
            <person name="Hornberger R."/>
            <person name="Greff Z."/>
            <person name="Keri G."/>
            <person name="Mann M."/>
            <person name="Daub H."/>
        </authorList>
    </citation>
    <scope>PHOSPHORYLATION [LARGE SCALE ANALYSIS] AT SER-12 AND SER-17</scope>
    <scope>IDENTIFICATION BY MASS SPECTROMETRY [LARGE SCALE ANALYSIS]</scope>
</reference>
<reference key="7">
    <citation type="journal article" date="2014" name="J. Proteomics">
        <title>An enzyme assisted RP-RPLC approach for in-depth analysis of human liver phosphoproteome.</title>
        <authorList>
            <person name="Bian Y."/>
            <person name="Song C."/>
            <person name="Cheng K."/>
            <person name="Dong M."/>
            <person name="Wang F."/>
            <person name="Huang J."/>
            <person name="Sun D."/>
            <person name="Wang L."/>
            <person name="Ye M."/>
            <person name="Zou H."/>
        </authorList>
    </citation>
    <scope>PHOSPHORYLATION [LARGE SCALE ANALYSIS] AT SER-45</scope>
    <scope>IDENTIFICATION BY MASS SPECTROMETRY [LARGE SCALE ANALYSIS]</scope>
    <source>
        <tissue>Liver</tissue>
    </source>
</reference>
<reference evidence="11" key="8">
    <citation type="journal article" date="2015" name="Acta Crystallogr.">
        <title>The high-resolution crystal structure of phosphatidylinositol 4-kinase IIbeta and the crystal structure of phosphatidylinositol 4-kinase IIalpha containing a nucleoside analogue provide a structural basis for isoform-specific inhibitor design.</title>
        <authorList>
            <person name="Klima M."/>
            <person name="Baumlova A."/>
            <person name="Chalupska D."/>
            <person name="Hrebabecky H."/>
            <person name="Dejmek M."/>
            <person name="Nencka R."/>
            <person name="Boura E."/>
        </authorList>
    </citation>
    <scope>X-RAY CRYSTALLOGRAPHY (1.90 ANGSTROMS) OF 90-165 AND 176-450 IN COMPLEX WITH ATP</scope>
</reference>
<reference key="9">
    <citation type="journal article" date="2009" name="Sci. Signal.">
        <title>Quantitative phosphoproteomic analysis of T cell receptor signaling reveals system-wide modulation of protein-protein interactions.</title>
        <authorList>
            <person name="Mayya V."/>
            <person name="Lundgren D.H."/>
            <person name="Hwang S.-I."/>
            <person name="Rezaul K."/>
            <person name="Wu L."/>
            <person name="Eng J.K."/>
            <person name="Rodionov V."/>
            <person name="Han D.K."/>
        </authorList>
    </citation>
    <scope>VARIANT [LARGE SCALE ANALYSIS] PRO-78</scope>
    <scope>IDENTIFICATION BY MASS SPECTROMETRY [LARGE SCALE ANALYSIS]</scope>
    <source>
        <tissue>Leukemic T-cell</tissue>
    </source>
</reference>
<gene>
    <name type="primary">PI4K2B</name>
</gene>
<dbReference type="EC" id="2.7.1.67" evidence="4 5"/>
<dbReference type="EMBL" id="AY065990">
    <property type="protein sequence ID" value="AAL47580.1"/>
    <property type="molecule type" value="mRNA"/>
</dbReference>
<dbReference type="EMBL" id="AF411320">
    <property type="protein sequence ID" value="AAL04154.1"/>
    <property type="molecule type" value="mRNA"/>
</dbReference>
<dbReference type="EMBL" id="AY091514">
    <property type="protein sequence ID" value="AAM12049.1"/>
    <property type="molecule type" value="mRNA"/>
</dbReference>
<dbReference type="EMBL" id="AK001967">
    <property type="protein sequence ID" value="BAA92006.1"/>
    <property type="molecule type" value="mRNA"/>
</dbReference>
<dbReference type="EMBL" id="BC051749">
    <property type="protein sequence ID" value="AAH51749.1"/>
    <property type="molecule type" value="mRNA"/>
</dbReference>
<dbReference type="CCDS" id="CCDS3433.1"/>
<dbReference type="RefSeq" id="NP_060793.2">
    <property type="nucleotide sequence ID" value="NM_018323.4"/>
</dbReference>
<dbReference type="PDB" id="4WTV">
    <property type="method" value="X-ray"/>
    <property type="resolution" value="1.90 A"/>
    <property type="chains" value="A/B=90-165, A/B=176-450"/>
</dbReference>
<dbReference type="PDB" id="8A5X">
    <property type="method" value="X-ray"/>
    <property type="resolution" value="2.40 A"/>
    <property type="chains" value="A=90-165, A=176-450"/>
</dbReference>
<dbReference type="PDBsum" id="4WTV"/>
<dbReference type="PDBsum" id="8A5X"/>
<dbReference type="SMR" id="Q8TCG2"/>
<dbReference type="BioGRID" id="120587">
    <property type="interactions" value="68"/>
</dbReference>
<dbReference type="FunCoup" id="Q8TCG2">
    <property type="interactions" value="2069"/>
</dbReference>
<dbReference type="IntAct" id="Q8TCG2">
    <property type="interactions" value="54"/>
</dbReference>
<dbReference type="MINT" id="Q8TCG2"/>
<dbReference type="STRING" id="9606.ENSP00000264864"/>
<dbReference type="ChEMBL" id="CHEMBL3220"/>
<dbReference type="DrugBank" id="DB02709">
    <property type="generic name" value="Resveratrol"/>
</dbReference>
<dbReference type="DrugCentral" id="Q8TCG2"/>
<dbReference type="GuidetoPHARMACOLOGY" id="2499"/>
<dbReference type="iPTMnet" id="Q8TCG2"/>
<dbReference type="PhosphoSitePlus" id="Q8TCG2"/>
<dbReference type="SwissPalm" id="Q8TCG2"/>
<dbReference type="BioMuta" id="PI4K2B"/>
<dbReference type="DMDM" id="74715788"/>
<dbReference type="jPOST" id="Q8TCG2"/>
<dbReference type="MassIVE" id="Q8TCG2"/>
<dbReference type="PaxDb" id="9606-ENSP00000264864"/>
<dbReference type="PeptideAtlas" id="Q8TCG2"/>
<dbReference type="ProteomicsDB" id="74134"/>
<dbReference type="Pumba" id="Q8TCG2"/>
<dbReference type="Antibodypedia" id="1318">
    <property type="antibodies" value="185 antibodies from 27 providers"/>
</dbReference>
<dbReference type="DNASU" id="55300"/>
<dbReference type="Ensembl" id="ENST00000264864.8">
    <property type="protein sequence ID" value="ENSP00000264864.6"/>
    <property type="gene ID" value="ENSG00000038210.14"/>
</dbReference>
<dbReference type="GeneID" id="55300"/>
<dbReference type="KEGG" id="hsa:55300"/>
<dbReference type="MANE-Select" id="ENST00000264864.8">
    <property type="protein sequence ID" value="ENSP00000264864.6"/>
    <property type="RefSeq nucleotide sequence ID" value="NM_018323.4"/>
    <property type="RefSeq protein sequence ID" value="NP_060793.2"/>
</dbReference>
<dbReference type="UCSC" id="uc003grk.3">
    <property type="organism name" value="human"/>
</dbReference>
<dbReference type="AGR" id="HGNC:18215"/>
<dbReference type="CTD" id="55300"/>
<dbReference type="DisGeNET" id="55300"/>
<dbReference type="GeneCards" id="PI4K2B"/>
<dbReference type="HGNC" id="HGNC:18215">
    <property type="gene designation" value="PI4K2B"/>
</dbReference>
<dbReference type="HPA" id="ENSG00000038210">
    <property type="expression patterns" value="Tissue enhanced (liver)"/>
</dbReference>
<dbReference type="MIM" id="612101">
    <property type="type" value="gene"/>
</dbReference>
<dbReference type="neXtProt" id="NX_Q8TCG2"/>
<dbReference type="OpenTargets" id="ENSG00000038210"/>
<dbReference type="PharmGKB" id="PA142671173"/>
<dbReference type="VEuPathDB" id="HostDB:ENSG00000038210"/>
<dbReference type="eggNOG" id="KOG2381">
    <property type="taxonomic scope" value="Eukaryota"/>
</dbReference>
<dbReference type="GeneTree" id="ENSGT00390000010434"/>
<dbReference type="HOGENOM" id="CLU_032516_1_0_1"/>
<dbReference type="InParanoid" id="Q8TCG2"/>
<dbReference type="OMA" id="PYAKVPF"/>
<dbReference type="OrthoDB" id="3349449at2759"/>
<dbReference type="PAN-GO" id="Q8TCG2">
    <property type="GO annotations" value="7 GO annotations based on evolutionary models"/>
</dbReference>
<dbReference type="PhylomeDB" id="Q8TCG2"/>
<dbReference type="TreeFam" id="TF314740"/>
<dbReference type="BioCyc" id="MetaCyc:HS00529-MONOMER"/>
<dbReference type="BRENDA" id="2.7.1.67">
    <property type="organism ID" value="2681"/>
</dbReference>
<dbReference type="PathwayCommons" id="Q8TCG2"/>
<dbReference type="Reactome" id="R-HSA-1483248">
    <property type="pathway name" value="Synthesis of PIPs at the ER membrane"/>
</dbReference>
<dbReference type="Reactome" id="R-HSA-1660499">
    <property type="pathway name" value="Synthesis of PIPs at the plasma membrane"/>
</dbReference>
<dbReference type="Reactome" id="R-HSA-1660514">
    <property type="pathway name" value="Synthesis of PIPs at the Golgi membrane"/>
</dbReference>
<dbReference type="Reactome" id="R-HSA-1660516">
    <property type="pathway name" value="Synthesis of PIPs at the early endosome membrane"/>
</dbReference>
<dbReference type="SignaLink" id="Q8TCG2"/>
<dbReference type="SIGNOR" id="Q8TCG2"/>
<dbReference type="BioGRID-ORCS" id="55300">
    <property type="hits" value="13 hits in 1161 CRISPR screens"/>
</dbReference>
<dbReference type="ChiTaRS" id="PI4K2B">
    <property type="organism name" value="human"/>
</dbReference>
<dbReference type="EvolutionaryTrace" id="Q8TCG2"/>
<dbReference type="GeneWiki" id="PI4K2B"/>
<dbReference type="GenomeRNAi" id="55300"/>
<dbReference type="Pharos" id="Q8TCG2">
    <property type="development level" value="Tbio"/>
</dbReference>
<dbReference type="PRO" id="PR:Q8TCG2"/>
<dbReference type="Proteomes" id="UP000005640">
    <property type="component" value="Chromosome 4"/>
</dbReference>
<dbReference type="RNAct" id="Q8TCG2">
    <property type="molecule type" value="protein"/>
</dbReference>
<dbReference type="Bgee" id="ENSG00000038210">
    <property type="expression patterns" value="Expressed in secondary oocyte and 176 other cell types or tissues"/>
</dbReference>
<dbReference type="ExpressionAtlas" id="Q8TCG2">
    <property type="expression patterns" value="baseline and differential"/>
</dbReference>
<dbReference type="GO" id="GO:0005829">
    <property type="term" value="C:cytosol"/>
    <property type="evidence" value="ECO:0000314"/>
    <property type="project" value="UniProtKB"/>
</dbReference>
<dbReference type="GO" id="GO:0031901">
    <property type="term" value="C:early endosome membrane"/>
    <property type="evidence" value="ECO:0000314"/>
    <property type="project" value="UniProtKB"/>
</dbReference>
<dbReference type="GO" id="GO:0005789">
    <property type="term" value="C:endoplasmic reticulum membrane"/>
    <property type="evidence" value="ECO:0000314"/>
    <property type="project" value="UniProtKB"/>
</dbReference>
<dbReference type="GO" id="GO:0005768">
    <property type="term" value="C:endosome"/>
    <property type="evidence" value="ECO:0000318"/>
    <property type="project" value="GO_Central"/>
</dbReference>
<dbReference type="GO" id="GO:0000139">
    <property type="term" value="C:Golgi membrane"/>
    <property type="evidence" value="ECO:0000314"/>
    <property type="project" value="UniProtKB"/>
</dbReference>
<dbReference type="GO" id="GO:0016020">
    <property type="term" value="C:membrane"/>
    <property type="evidence" value="ECO:0007005"/>
    <property type="project" value="UniProtKB"/>
</dbReference>
<dbReference type="GO" id="GO:0005886">
    <property type="term" value="C:plasma membrane"/>
    <property type="evidence" value="ECO:0000314"/>
    <property type="project" value="UniProtKB"/>
</dbReference>
<dbReference type="GO" id="GO:0005802">
    <property type="term" value="C:trans-Golgi network"/>
    <property type="evidence" value="ECO:0000318"/>
    <property type="project" value="GO_Central"/>
</dbReference>
<dbReference type="GO" id="GO:0004430">
    <property type="term" value="F:1-phosphatidylinositol 4-kinase activity"/>
    <property type="evidence" value="ECO:0000314"/>
    <property type="project" value="UniProtKB"/>
</dbReference>
<dbReference type="GO" id="GO:0005524">
    <property type="term" value="F:ATP binding"/>
    <property type="evidence" value="ECO:0007669"/>
    <property type="project" value="UniProtKB-KW"/>
</dbReference>
<dbReference type="GO" id="GO:0007032">
    <property type="term" value="P:endosome organization"/>
    <property type="evidence" value="ECO:0000318"/>
    <property type="project" value="GO_Central"/>
</dbReference>
<dbReference type="GO" id="GO:0007030">
    <property type="term" value="P:Golgi organization"/>
    <property type="evidence" value="ECO:0000318"/>
    <property type="project" value="GO_Central"/>
</dbReference>
<dbReference type="GO" id="GO:0006661">
    <property type="term" value="P:phosphatidylinositol biosynthetic process"/>
    <property type="evidence" value="ECO:0000304"/>
    <property type="project" value="Reactome"/>
</dbReference>
<dbReference type="GO" id="GO:0046854">
    <property type="term" value="P:phosphatidylinositol phosphate biosynthetic process"/>
    <property type="evidence" value="ECO:0000314"/>
    <property type="project" value="UniProtKB"/>
</dbReference>
<dbReference type="Gene3D" id="1.10.1070.20">
    <property type="match status" value="1"/>
</dbReference>
<dbReference type="InterPro" id="IPR039756">
    <property type="entry name" value="Lsb6/PI4K2"/>
</dbReference>
<dbReference type="InterPro" id="IPR000403">
    <property type="entry name" value="PI3/4_kinase_cat_dom"/>
</dbReference>
<dbReference type="PANTHER" id="PTHR12865:SF6">
    <property type="entry name" value="PHOSPHATIDYLINOSITOL 4-KINASE TYPE 2-BETA"/>
    <property type="match status" value="1"/>
</dbReference>
<dbReference type="PANTHER" id="PTHR12865">
    <property type="entry name" value="PHOSPHATIDYLINOSITOL 4-KINASE TYPE-II"/>
    <property type="match status" value="1"/>
</dbReference>
<dbReference type="Pfam" id="PF00454">
    <property type="entry name" value="PI3_PI4_kinase"/>
    <property type="match status" value="1"/>
</dbReference>
<dbReference type="PROSITE" id="PS50290">
    <property type="entry name" value="PI3_4_KINASE_3"/>
    <property type="match status" value="1"/>
</dbReference>
<comment type="function">
    <text evidence="4 5">Together with PI4K2A and the type III PI4Ks (PIK4CA and PIK4CB) it contributes to the overall PI4-kinase activity of the cell (PubMed:11923287, PubMed:12324459). This contribution may be especially significant in plasma membrane, endosomal and Golgi compartments (PubMed:11923287, PubMed:12324459). The phosphorylation of phosphatidylinositol (PI) to PI4P is the first committed step in the generation of phosphatidylinositol 4,5-bisphosphate (PIP2), a precursor of the second messenger inositol 1,4,5-trisphosphate (InsP3) (PubMed:11923287, PubMed:12324459). Contributes to the production of InsP3 in stimulated cells and is likely to be involved in the regulation of vesicular trafficking.</text>
</comment>
<comment type="catalytic activity">
    <reaction evidence="4 5">
        <text>a 1,2-diacyl-sn-glycero-3-phospho-(1D-myo-inositol) + ATP = a 1,2-diacyl-sn-glycero-3-phospho-(1D-myo-inositol 4-phosphate) + ADP + H(+)</text>
        <dbReference type="Rhea" id="RHEA:19877"/>
        <dbReference type="ChEBI" id="CHEBI:15378"/>
        <dbReference type="ChEBI" id="CHEBI:30616"/>
        <dbReference type="ChEBI" id="CHEBI:57880"/>
        <dbReference type="ChEBI" id="CHEBI:58178"/>
        <dbReference type="ChEBI" id="CHEBI:456216"/>
        <dbReference type="EC" id="2.7.1.67"/>
    </reaction>
    <physiologicalReaction direction="left-to-right" evidence="10">
        <dbReference type="Rhea" id="RHEA:19878"/>
    </physiologicalReaction>
</comment>
<comment type="activity regulation">
    <text evidence="4 5">Inhibited by phenylarsine oxide and adenosine (PubMed:11923287). Activation through membrane association is stimulated by active RAC1 (PubMed:12324459).</text>
</comment>
<comment type="subcellular location">
    <subcellularLocation>
        <location evidence="5">Cytoplasm</location>
        <location evidence="5">Cytosol</location>
    </subcellularLocation>
    <subcellularLocation>
        <location evidence="4 5">Golgi apparatus membrane</location>
        <topology evidence="5">Peripheral membrane protein</topology>
    </subcellularLocation>
    <subcellularLocation>
        <location evidence="5">Endoplasmic reticulum membrane</location>
    </subcellularLocation>
    <subcellularLocation>
        <location evidence="4 5">Cell membrane</location>
    </subcellularLocation>
    <subcellularLocation>
        <location evidence="4">Early endosome membrane</location>
    </subcellularLocation>
    <text evidence="4 5">Mainly cytosolic, association with membranes of the Golgi, endoplasmic and plasma membrane is stimulated by active RAC1 (PubMed:12324459). Association with early endosomes has not been confirmed (PubMed:11923287, PubMed:12324459).</text>
</comment>
<comment type="tissue specificity">
    <text evidence="4">Widely expressed.</text>
</comment>
<comment type="similarity">
    <text evidence="9">Belongs to the PI3/PI4-kinase family. Type II PI4K subfamily.</text>
</comment>
<feature type="chain" id="PRO_0000285164" description="Phosphatidylinositol 4-kinase type 2-beta">
    <location>
        <begin position="1"/>
        <end position="481"/>
    </location>
</feature>
<feature type="domain" description="PI3K/PI4K catalytic" evidence="2">
    <location>
        <begin position="120"/>
        <end position="451"/>
    </location>
</feature>
<feature type="region of interest" description="Disordered" evidence="3">
    <location>
        <begin position="1"/>
        <end position="82"/>
    </location>
</feature>
<feature type="region of interest" description="G-loop" evidence="2">
    <location>
        <begin position="126"/>
        <end position="132"/>
    </location>
</feature>
<feature type="region of interest" description="Important for substrate binding" evidence="1">
    <location>
        <begin position="153"/>
        <end position="155"/>
    </location>
</feature>
<feature type="region of interest" description="Important for interaction with membranes" evidence="1">
    <location>
        <begin position="161"/>
        <end position="174"/>
    </location>
</feature>
<feature type="region of interest" description="Important for interaction with membranes" evidence="1">
    <location>
        <begin position="264"/>
        <end position="272"/>
    </location>
</feature>
<feature type="region of interest" description="Catalytic loop" evidence="2">
    <location>
        <begin position="301"/>
        <end position="309"/>
    </location>
</feature>
<feature type="region of interest" description="Activation loop" evidence="2">
    <location>
        <begin position="342"/>
        <end position="362"/>
    </location>
</feature>
<feature type="region of interest" description="Important for interaction with membranes" evidence="1">
    <location>
        <begin position="357"/>
        <end position="366"/>
    </location>
</feature>
<feature type="compositionally biased region" description="Basic and acidic residues" evidence="3">
    <location>
        <begin position="1"/>
        <end position="11"/>
    </location>
</feature>
<feature type="compositionally biased region" description="Acidic residues" evidence="3">
    <location>
        <begin position="53"/>
        <end position="64"/>
    </location>
</feature>
<feature type="binding site" evidence="8 11">
    <location>
        <position position="133"/>
    </location>
    <ligand>
        <name>ATP</name>
        <dbReference type="ChEBI" id="CHEBI:30616"/>
    </ligand>
</feature>
<feature type="binding site" evidence="8 11">
    <location>
        <position position="148"/>
    </location>
    <ligand>
        <name>ATP</name>
        <dbReference type="ChEBI" id="CHEBI:30616"/>
    </ligand>
</feature>
<feature type="binding site" evidence="8 11">
    <location>
        <begin position="257"/>
        <end position="260"/>
    </location>
    <ligand>
        <name>ATP</name>
        <dbReference type="ChEBI" id="CHEBI:30616"/>
    </ligand>
</feature>
<feature type="binding site" evidence="8 11">
    <location>
        <begin position="271"/>
        <end position="272"/>
    </location>
    <ligand>
        <name>ATP</name>
        <dbReference type="ChEBI" id="CHEBI:30616"/>
    </ligand>
</feature>
<feature type="binding site" evidence="8 11">
    <location>
        <position position="344"/>
    </location>
    <ligand>
        <name>ATP</name>
        <dbReference type="ChEBI" id="CHEBI:30616"/>
    </ligand>
</feature>
<feature type="modified residue" description="Phosphoserine" evidence="12">
    <location>
        <position position="12"/>
    </location>
</feature>
<feature type="modified residue" description="Phosphoserine" evidence="12">
    <location>
        <position position="17"/>
    </location>
</feature>
<feature type="modified residue" description="Phosphoserine" evidence="14">
    <location>
        <position position="45"/>
    </location>
</feature>
<feature type="sequence variant" id="VAR_031974" description="In dbSNP:rs313549." evidence="4 5 6 7 13">
    <original>S</original>
    <variation>P</variation>
    <location>
        <position position="78"/>
    </location>
</feature>
<feature type="mutagenesis site" description="Increased localization to plasma membrane." evidence="4">
    <original>D</original>
    <variation>A</variation>
    <location>
        <position position="304"/>
    </location>
</feature>
<feature type="turn" evidence="16">
    <location>
        <begin position="97"/>
        <end position="100"/>
    </location>
</feature>
<feature type="helix" evidence="15">
    <location>
        <begin position="104"/>
        <end position="118"/>
    </location>
</feature>
<feature type="strand" evidence="15">
    <location>
        <begin position="124"/>
        <end position="130"/>
    </location>
</feature>
<feature type="strand" evidence="15">
    <location>
        <begin position="134"/>
        <end position="137"/>
    </location>
</feature>
<feature type="strand" evidence="15">
    <location>
        <begin position="143"/>
        <end position="149"/>
    </location>
</feature>
<feature type="helix" evidence="16">
    <location>
        <begin position="150"/>
        <end position="152"/>
    </location>
</feature>
<feature type="helix" evidence="16">
    <location>
        <begin position="162"/>
        <end position="164"/>
    </location>
</feature>
<feature type="helix" evidence="16">
    <location>
        <begin position="176"/>
        <end position="178"/>
    </location>
</feature>
<feature type="helix" evidence="15">
    <location>
        <begin position="185"/>
        <end position="199"/>
    </location>
</feature>
<feature type="strand" evidence="15">
    <location>
        <begin position="207"/>
        <end position="212"/>
    </location>
</feature>
<feature type="helix" evidence="16">
    <location>
        <begin position="221"/>
        <end position="225"/>
    </location>
</feature>
<feature type="strand" evidence="15">
    <location>
        <begin position="252"/>
        <end position="258"/>
    </location>
</feature>
<feature type="helix" evidence="15">
    <location>
        <begin position="266"/>
        <end position="272"/>
    </location>
</feature>
<feature type="turn" evidence="15">
    <location>
        <begin position="273"/>
        <end position="275"/>
    </location>
</feature>
<feature type="helix" evidence="15">
    <location>
        <begin position="280"/>
        <end position="299"/>
    </location>
</feature>
<feature type="strand" evidence="15">
    <location>
        <begin position="307"/>
        <end position="314"/>
    </location>
</feature>
<feature type="strand" evidence="15">
    <location>
        <begin position="337"/>
        <end position="342"/>
    </location>
</feature>
<feature type="strand" evidence="15">
    <location>
        <begin position="356"/>
        <end position="358"/>
    </location>
</feature>
<feature type="helix" evidence="15">
    <location>
        <begin position="363"/>
        <end position="366"/>
    </location>
</feature>
<feature type="helix" evidence="15">
    <location>
        <begin position="368"/>
        <end position="371"/>
    </location>
</feature>
<feature type="helix" evidence="15">
    <location>
        <begin position="376"/>
        <end position="386"/>
    </location>
</feature>
<feature type="helix" evidence="15">
    <location>
        <begin position="389"/>
        <end position="403"/>
    </location>
</feature>
<feature type="helix" evidence="15">
    <location>
        <begin position="411"/>
        <end position="433"/>
    </location>
</feature>
<feature type="helix" evidence="15">
    <location>
        <begin position="438"/>
        <end position="441"/>
    </location>
</feature>
<evidence type="ECO:0000250" key="1">
    <source>
        <dbReference type="UniProtKB" id="Q9BTU6"/>
    </source>
</evidence>
<evidence type="ECO:0000255" key="2">
    <source>
        <dbReference type="PROSITE-ProRule" id="PRU00269"/>
    </source>
</evidence>
<evidence type="ECO:0000256" key="3">
    <source>
        <dbReference type="SAM" id="MobiDB-lite"/>
    </source>
</evidence>
<evidence type="ECO:0000269" key="4">
    <source>
    </source>
</evidence>
<evidence type="ECO:0000269" key="5">
    <source>
    </source>
</evidence>
<evidence type="ECO:0000269" key="6">
    <source>
    </source>
</evidence>
<evidence type="ECO:0000269" key="7">
    <source>
    </source>
</evidence>
<evidence type="ECO:0000269" key="8">
    <source>
    </source>
</evidence>
<evidence type="ECO:0000305" key="9"/>
<evidence type="ECO:0000305" key="10">
    <source>
    </source>
</evidence>
<evidence type="ECO:0007744" key="11">
    <source>
        <dbReference type="PDB" id="4WTV"/>
    </source>
</evidence>
<evidence type="ECO:0007744" key="12">
    <source>
    </source>
</evidence>
<evidence type="ECO:0007744" key="13">
    <source>
    </source>
</evidence>
<evidence type="ECO:0007744" key="14">
    <source>
    </source>
</evidence>
<evidence type="ECO:0007829" key="15">
    <source>
        <dbReference type="PDB" id="4WTV"/>
    </source>
</evidence>
<evidence type="ECO:0007829" key="16">
    <source>
        <dbReference type="PDB" id="8A5X"/>
    </source>
</evidence>
<sequence length="481" mass="54744">MEDPSEPDRLASADGGSPEEEEDGEREPLLPRIAWAHPRRGAPGSAVRLLDAAGEEGEAGDEELPLPPGDVGVSRSSSAELDRSRPAVSVTIGTSEMNAFLDDPEFADIMLRAEQAIEVGIFPERISQGSSGSYFVKDPKRKIIGVFKPKSEEPYGQLNPKWTKYVHKVCCPCCFGRGCLIPNQGYLSEAGAYLVDNKLHLSIVPKTKVVWLVSETFNYNAIDRAKSRGKKYALEKVPKVGRKFHRIGLPPKIGSFQLFVEGYKEAEYWLRKFEADPLPENIRKQFQSQFERLVILDYIIRNTDRGNDNWLVRYEKQKCEKEIDHKESKWIDDEEFLIKIAAIDNGLAFPFKHPDEWRAYPFHWAWLPQAKVPFSEEIRNLILPYISDMNFVQDLCEDLYELFKTDKGFDKATFESQMSVMRGQILNLTQALRDGKSPFQLVQIPCVIVERSQGGSQGRIVHLSNSFTQTVNCRKPFFSSW</sequence>